<protein>
    <recommendedName>
        <fullName evidence="1">Large ribosomal subunit protein uL13</fullName>
    </recommendedName>
    <alternativeName>
        <fullName evidence="2">50S ribosomal protein L13</fullName>
    </alternativeName>
</protein>
<proteinExistence type="inferred from homology"/>
<feature type="chain" id="PRO_1000055381" description="Large ribosomal subunit protein uL13">
    <location>
        <begin position="1"/>
        <end position="142"/>
    </location>
</feature>
<keyword id="KW-0687">Ribonucleoprotein</keyword>
<keyword id="KW-0689">Ribosomal protein</keyword>
<evidence type="ECO:0000255" key="1">
    <source>
        <dbReference type="HAMAP-Rule" id="MF_01366"/>
    </source>
</evidence>
<evidence type="ECO:0000305" key="2"/>
<comment type="function">
    <text evidence="1">This protein is one of the early assembly proteins of the 50S ribosomal subunit, although it is not seen to bind rRNA by itself. It is important during the early stages of 50S assembly.</text>
</comment>
<comment type="subunit">
    <text evidence="1">Part of the 50S ribosomal subunit.</text>
</comment>
<comment type="similarity">
    <text evidence="1">Belongs to the universal ribosomal protein uL13 family.</text>
</comment>
<sequence length="142" mass="15952">MKTFTAKPSNIKREWLLIDATDKTLGRLATEVAMILRGKNKPEYTPHMDTGDYVVIVNAEKIAVTGNKRKAKTYYHHTGYIGGIKSVSFEKLIATHPERAIEKAVRGMLPRTPLGRTMFKKLKVYAGEAHPHTAQQPKAHNI</sequence>
<name>RL13_FRATF</name>
<accession>A7NCM5</accession>
<reference key="1">
    <citation type="journal article" date="2009" name="PLoS ONE">
        <title>Complete genome sequence of Francisella tularensis subspecies holarctica FTNF002-00.</title>
        <authorList>
            <person name="Barabote R.D."/>
            <person name="Xie G."/>
            <person name="Brettin T.S."/>
            <person name="Hinrichs S.H."/>
            <person name="Fey P.D."/>
            <person name="Jay J.J."/>
            <person name="Engle J.L."/>
            <person name="Godbole S.D."/>
            <person name="Noronha J.M."/>
            <person name="Scheuermann R.H."/>
            <person name="Zhou L.W."/>
            <person name="Lion C."/>
            <person name="Dempsey M.P."/>
        </authorList>
    </citation>
    <scope>NUCLEOTIDE SEQUENCE [LARGE SCALE GENOMIC DNA]</scope>
    <source>
        <strain>FTNF002-00 / FTA</strain>
    </source>
</reference>
<gene>
    <name evidence="1" type="primary">rplM</name>
    <name type="ordered locus">FTA_1253</name>
</gene>
<organism>
    <name type="scientific">Francisella tularensis subsp. holarctica (strain FTNF002-00 / FTA)</name>
    <dbReference type="NCBI Taxonomy" id="458234"/>
    <lineage>
        <taxon>Bacteria</taxon>
        <taxon>Pseudomonadati</taxon>
        <taxon>Pseudomonadota</taxon>
        <taxon>Gammaproteobacteria</taxon>
        <taxon>Thiotrichales</taxon>
        <taxon>Francisellaceae</taxon>
        <taxon>Francisella</taxon>
    </lineage>
</organism>
<dbReference type="EMBL" id="CP000803">
    <property type="protein sequence ID" value="ABU61728.1"/>
    <property type="molecule type" value="Genomic_DNA"/>
</dbReference>
<dbReference type="RefSeq" id="WP_010031737.1">
    <property type="nucleotide sequence ID" value="NC_009749.1"/>
</dbReference>
<dbReference type="SMR" id="A7NCM5"/>
<dbReference type="KEGG" id="fta:FTA_1253"/>
<dbReference type="HOGENOM" id="CLU_082184_2_2_6"/>
<dbReference type="GO" id="GO:0022625">
    <property type="term" value="C:cytosolic large ribosomal subunit"/>
    <property type="evidence" value="ECO:0007669"/>
    <property type="project" value="TreeGrafter"/>
</dbReference>
<dbReference type="GO" id="GO:0003729">
    <property type="term" value="F:mRNA binding"/>
    <property type="evidence" value="ECO:0007669"/>
    <property type="project" value="TreeGrafter"/>
</dbReference>
<dbReference type="GO" id="GO:0003735">
    <property type="term" value="F:structural constituent of ribosome"/>
    <property type="evidence" value="ECO:0007669"/>
    <property type="project" value="InterPro"/>
</dbReference>
<dbReference type="GO" id="GO:0017148">
    <property type="term" value="P:negative regulation of translation"/>
    <property type="evidence" value="ECO:0007669"/>
    <property type="project" value="TreeGrafter"/>
</dbReference>
<dbReference type="GO" id="GO:0006412">
    <property type="term" value="P:translation"/>
    <property type="evidence" value="ECO:0007669"/>
    <property type="project" value="UniProtKB-UniRule"/>
</dbReference>
<dbReference type="CDD" id="cd00392">
    <property type="entry name" value="Ribosomal_L13"/>
    <property type="match status" value="1"/>
</dbReference>
<dbReference type="FunFam" id="3.90.1180.10:FF:000001">
    <property type="entry name" value="50S ribosomal protein L13"/>
    <property type="match status" value="1"/>
</dbReference>
<dbReference type="Gene3D" id="3.90.1180.10">
    <property type="entry name" value="Ribosomal protein L13"/>
    <property type="match status" value="1"/>
</dbReference>
<dbReference type="HAMAP" id="MF_01366">
    <property type="entry name" value="Ribosomal_uL13"/>
    <property type="match status" value="1"/>
</dbReference>
<dbReference type="InterPro" id="IPR005822">
    <property type="entry name" value="Ribosomal_uL13"/>
</dbReference>
<dbReference type="InterPro" id="IPR005823">
    <property type="entry name" value="Ribosomal_uL13_bac-type"/>
</dbReference>
<dbReference type="InterPro" id="IPR023563">
    <property type="entry name" value="Ribosomal_uL13_CS"/>
</dbReference>
<dbReference type="InterPro" id="IPR036899">
    <property type="entry name" value="Ribosomal_uL13_sf"/>
</dbReference>
<dbReference type="NCBIfam" id="TIGR01066">
    <property type="entry name" value="rplM_bact"/>
    <property type="match status" value="1"/>
</dbReference>
<dbReference type="PANTHER" id="PTHR11545:SF2">
    <property type="entry name" value="LARGE RIBOSOMAL SUBUNIT PROTEIN UL13M"/>
    <property type="match status" value="1"/>
</dbReference>
<dbReference type="PANTHER" id="PTHR11545">
    <property type="entry name" value="RIBOSOMAL PROTEIN L13"/>
    <property type="match status" value="1"/>
</dbReference>
<dbReference type="Pfam" id="PF00572">
    <property type="entry name" value="Ribosomal_L13"/>
    <property type="match status" value="1"/>
</dbReference>
<dbReference type="PIRSF" id="PIRSF002181">
    <property type="entry name" value="Ribosomal_L13"/>
    <property type="match status" value="1"/>
</dbReference>
<dbReference type="SUPFAM" id="SSF52161">
    <property type="entry name" value="Ribosomal protein L13"/>
    <property type="match status" value="1"/>
</dbReference>
<dbReference type="PROSITE" id="PS00783">
    <property type="entry name" value="RIBOSOMAL_L13"/>
    <property type="match status" value="1"/>
</dbReference>